<reference key="1">
    <citation type="journal article" date="2008" name="Res. J. Biol. Sci.">
        <title>Complementary DNA Cloning and Immunologic Characterization of a New Platanus orientalis Pollen Allergen, Pla or 1.0101.</title>
        <authorList>
            <person name="Pazouki N."/>
            <person name="Sankian M."/>
            <person name="Nejadsattari T."/>
            <person name="Khavari-Nejad R.A."/>
            <person name="Varasteh A.R."/>
        </authorList>
    </citation>
    <scope>NUCLEOTIDE SEQUENCE [MRNA]</scope>
    <scope>TISSUE SPECIFICITY</scope>
    <scope>ALLERGEN</scope>
    <source>
        <tissue evidence="10">Pollen</tissue>
    </source>
</reference>
<reference evidence="12" key="2">
    <citation type="journal article" date="2008" name="Allergy Asthma Proc.">
        <title>Oriental plane pollen allergy: identification of allergens and cross-reactivity between relevant species.</title>
        <authorList>
            <person name="Pazouki N."/>
            <person name="Sankian M."/>
            <person name="Nejadsattari T."/>
            <person name="Khavari-Nejad R.A."/>
            <person name="Varasteh A.R."/>
        </authorList>
    </citation>
    <scope>TISSUE SPECIFICITY</scope>
    <scope>ALLERGEN</scope>
</reference>
<reference evidence="12" key="3">
    <citation type="journal article" date="2009" name="J. Biosci. Bioeng.">
        <title>Identification of cyclophilin as a novel allergen from Platanus orientalis pollens by mass spectrometry.</title>
        <authorList>
            <person name="Pazouki N."/>
            <person name="Sankian M."/>
            <person name="Leung P.T."/>
            <person name="Nejadsattari T."/>
            <person name="Khavari-Nejad R.A."/>
            <person name="Varasteh A.R."/>
        </authorList>
    </citation>
    <scope>ALLERGEN</scope>
</reference>
<reference key="4">
    <citation type="journal article" date="2017" name="Int. J. Biometeorol.">
        <title>Impact of traffic-related air pollution on the expression of Platanus orientalis pollen allergens.</title>
        <authorList>
            <person name="Sedghy F."/>
            <person name="Sankian M."/>
            <person name="Moghadam M."/>
            <person name="Ghasemi Z."/>
            <person name="Mahmoudi M."/>
            <person name="Varasteh A.R."/>
        </authorList>
    </citation>
    <scope>TISSUE SPECIFICITY</scope>
    <scope>INDUCTION</scope>
</reference>
<protein>
    <recommendedName>
        <fullName evidence="11">Putative invertase inhibitor</fullName>
    </recommendedName>
    <alternativeName>
        <fullName evidence="7 8 9 10">Pollen allergen Pla or 1</fullName>
    </alternativeName>
    <alternativeName>
        <fullName evidence="8 10">Pollen allergen Pla or 1.0101</fullName>
    </alternativeName>
    <allergenName evidence="8 10">Pla or 1.0101</allergenName>
</protein>
<name>PLAO1_PLAOI</name>
<organism evidence="12">
    <name type="scientific">Platanus orientalis</name>
    <name type="common">Oriental plane-tree</name>
    <dbReference type="NCBI Taxonomy" id="122832"/>
    <lineage>
        <taxon>Eukaryota</taxon>
        <taxon>Viridiplantae</taxon>
        <taxon>Streptophyta</taxon>
        <taxon>Embryophyta</taxon>
        <taxon>Tracheophyta</taxon>
        <taxon>Spermatophyta</taxon>
        <taxon>Magnoliopsida</taxon>
        <taxon>Proteales</taxon>
        <taxon>Platanaceae</taxon>
        <taxon>Platanus</taxon>
    </lineage>
</organism>
<comment type="tissue specificity">
    <text evidence="3 5 6">Expressed in pollen (at protein level) (PubMed:19173789, PubMed:27255304). Expressed in pollen (PubMed:27255304, Ref.1).</text>
</comment>
<comment type="induction">
    <text evidence="5">Expression of mRNA is induced by ground vehicle traffic-related air pollution. No significant difference in the level of protein expression between pollen samples collected from urban polluted versus unpolluted areas.</text>
</comment>
<comment type="allergen">
    <text evidence="3 4 6">Causes an allergic reaction in human (PubMed:19173789, PubMed:19217563, Ref.1). Binds to IgE in 57% of the 7 patients tested allergic to oriental plane-tree pollen (PubMed:19217563, Ref.1). Binds to IgE in 21% of the 19 patients tested allergic to oriental plane-tree pollen (PubMed:19173789).</text>
</comment>
<comment type="similarity">
    <text evidence="11">Belongs to the PMEI family.</text>
</comment>
<sequence>MKLSFSLCIFFLISADIVQGTCKKVAQRSPNVNYDFCVKSLGADPKSHSADLQGLGVISANLAIQQGSKIQTFIGRILKSKVDPALKKYLNDCVGLYADAKSSVQEAIADFKSKDYASANVKMSAALDDSVTCEDGFKEKKGIASPVTKENKDYVQLTAISLAITKLLGA</sequence>
<keyword id="KW-0020">Allergen</keyword>
<keyword id="KW-1015">Disulfide bond</keyword>
<keyword id="KW-0732">Signal</keyword>
<evidence type="ECO:0000250" key="1">
    <source>
        <dbReference type="UniProtKB" id="Q8GT41"/>
    </source>
</evidence>
<evidence type="ECO:0000250" key="2">
    <source>
        <dbReference type="UniProtKB" id="Q9LNF2"/>
    </source>
</evidence>
<evidence type="ECO:0000269" key="3">
    <source>
    </source>
</evidence>
<evidence type="ECO:0000269" key="4">
    <source>
    </source>
</evidence>
<evidence type="ECO:0000269" key="5">
    <source>
    </source>
</evidence>
<evidence type="ECO:0000269" key="6">
    <source ref="1"/>
</evidence>
<evidence type="ECO:0000303" key="7">
    <source>
    </source>
</evidence>
<evidence type="ECO:0000303" key="8">
    <source>
    </source>
</evidence>
<evidence type="ECO:0000303" key="9">
    <source>
    </source>
</evidence>
<evidence type="ECO:0000303" key="10">
    <source ref="1"/>
</evidence>
<evidence type="ECO:0000305" key="11"/>
<evidence type="ECO:0000312" key="12">
    <source>
        <dbReference type="EMBL" id="ABY21305.1"/>
    </source>
</evidence>
<feature type="signal peptide" evidence="1">
    <location>
        <begin position="1"/>
        <end position="14"/>
    </location>
</feature>
<feature type="chain" id="PRO_5002745678" description="Putative invertase inhibitor" evidence="1">
    <location>
        <begin position="15"/>
        <end position="170"/>
    </location>
</feature>
<feature type="disulfide bond" evidence="2">
    <location>
        <begin position="22"/>
        <end position="37"/>
    </location>
</feature>
<feature type="disulfide bond" evidence="2">
    <location>
        <begin position="93"/>
        <end position="133"/>
    </location>
</feature>
<proteinExistence type="evidence at protein level"/>
<accession>A9YUH4</accession>
<dbReference type="EMBL" id="EU296476">
    <property type="protein sequence ID" value="ABY21305.1"/>
    <property type="molecule type" value="mRNA"/>
</dbReference>
<dbReference type="SMR" id="A9YUH4"/>
<dbReference type="Allergome" id="2772">
    <property type="allergen name" value="Pla or 1"/>
</dbReference>
<dbReference type="Allergome" id="5770">
    <property type="allergen name" value="Pla or 1.0101"/>
</dbReference>
<dbReference type="GO" id="GO:0004857">
    <property type="term" value="F:enzyme inhibitor activity"/>
    <property type="evidence" value="ECO:0007669"/>
    <property type="project" value="InterPro"/>
</dbReference>
<dbReference type="CDD" id="cd15795">
    <property type="entry name" value="PMEI-Pla_a_1_like"/>
    <property type="match status" value="1"/>
</dbReference>
<dbReference type="FunFam" id="1.20.140.40:FF:000002">
    <property type="entry name" value="Putative invertase inhibitor"/>
    <property type="match status" value="1"/>
</dbReference>
<dbReference type="Gene3D" id="1.20.140.40">
    <property type="entry name" value="Invertase/pectin methylesterase inhibitor family protein"/>
    <property type="match status" value="1"/>
</dbReference>
<dbReference type="InterPro" id="IPR035513">
    <property type="entry name" value="Invertase/methylesterase_inhib"/>
</dbReference>
<dbReference type="InterPro" id="IPR006501">
    <property type="entry name" value="Pectinesterase_inhib_dom"/>
</dbReference>
<dbReference type="InterPro" id="IPR034088">
    <property type="entry name" value="Pla_a_1-like"/>
</dbReference>
<dbReference type="NCBIfam" id="TIGR01614">
    <property type="entry name" value="PME_inhib"/>
    <property type="match status" value="1"/>
</dbReference>
<dbReference type="PANTHER" id="PTHR35357">
    <property type="entry name" value="OS02G0537100 PROTEIN"/>
    <property type="match status" value="1"/>
</dbReference>
<dbReference type="PANTHER" id="PTHR35357:SF17">
    <property type="entry name" value="PECTINESTERASE INHIBITOR 12"/>
    <property type="match status" value="1"/>
</dbReference>
<dbReference type="Pfam" id="PF04043">
    <property type="entry name" value="PMEI"/>
    <property type="match status" value="1"/>
</dbReference>
<dbReference type="SMART" id="SM00856">
    <property type="entry name" value="PMEI"/>
    <property type="match status" value="1"/>
</dbReference>
<dbReference type="SUPFAM" id="SSF101148">
    <property type="entry name" value="Plant invertase/pectin methylesterase inhibitor"/>
    <property type="match status" value="1"/>
</dbReference>